<sequence>MSSSPPLDGSDHPAHSSGQSPEAGNPTSLARSVSASVCPVKPDNPDSTEPEAVTALEASDGFQINSKQTDRLPLQGHSPCAAAAAPSSAMPLRHSSEAAGVADSLEASAERRTQGLRFHLHTRQEVNLSITTTRMHEPQMFAGEEGWHPENQNPSQVNDLQQHQEPENARHEAGPRDAPSDTGDLELPGERQQKHEVADREATMRGGRLQQDAGLPDPGKGALPSGHCGRPDSETLMEVDAAEQSLVAVLSSSVGNGSASGLTLGNPLMEVELPTCSPSSEILNGSIPIQDLQPPEGSVEMPGTDRAYGGRASSSSVCGSSQPPAESAEESCSSITTALKELHELLVISSKPASEAAYEEVTCQSEGTAWGQTRVNPSERWTESERRTQDEDRPQVSHAIPECVKTEKLTDASPDTRIEDGENATFQGPGGGLSTDHGAPRSRGSVHESRSVTVTSAETSNQSHRTLGVEISPRLLTGEGDALSQTCEQTKSLLVKDLGQGTQNPAPDRPATREDVCRDAARPSLEVEAPPSHSSGPCILPPLGFPAADIDRILRAGFTLQEALGALHRVGGNADLALLVLLAKNIVVPT</sequence>
<proteinExistence type="evidence at transcript level"/>
<organism>
    <name type="scientific">Oryctolagus cuniculus</name>
    <name type="common">Rabbit</name>
    <dbReference type="NCBI Taxonomy" id="9986"/>
    <lineage>
        <taxon>Eukaryota</taxon>
        <taxon>Metazoa</taxon>
        <taxon>Chordata</taxon>
        <taxon>Craniata</taxon>
        <taxon>Vertebrata</taxon>
        <taxon>Euteleostomi</taxon>
        <taxon>Mammalia</taxon>
        <taxon>Eutheria</taxon>
        <taxon>Euarchontoglires</taxon>
        <taxon>Glires</taxon>
        <taxon>Lagomorpha</taxon>
        <taxon>Leporidae</taxon>
        <taxon>Oryctolagus</taxon>
    </lineage>
</organism>
<feature type="chain" id="PRO_0000324153" description="Regulatory solute carrier protein family 1 member 1">
    <location>
        <begin position="1"/>
        <end position="590"/>
    </location>
</feature>
<feature type="domain" description="UBA" evidence="2">
    <location>
        <begin position="544"/>
        <end position="584"/>
    </location>
</feature>
<feature type="region of interest" description="Disordered" evidence="3">
    <location>
        <begin position="1"/>
        <end position="116"/>
    </location>
</feature>
<feature type="region of interest" description="Disordered" evidence="3">
    <location>
        <begin position="144"/>
        <end position="234"/>
    </location>
</feature>
<feature type="region of interest" description="Disordered" evidence="3">
    <location>
        <begin position="277"/>
        <end position="331"/>
    </location>
</feature>
<feature type="region of interest" description="Disordered" evidence="3">
    <location>
        <begin position="359"/>
        <end position="466"/>
    </location>
</feature>
<feature type="compositionally biased region" description="Polar residues" evidence="3">
    <location>
        <begin position="16"/>
        <end position="35"/>
    </location>
</feature>
<feature type="compositionally biased region" description="Low complexity" evidence="3">
    <location>
        <begin position="78"/>
        <end position="91"/>
    </location>
</feature>
<feature type="compositionally biased region" description="Polar residues" evidence="3">
    <location>
        <begin position="150"/>
        <end position="161"/>
    </location>
</feature>
<feature type="compositionally biased region" description="Basic and acidic residues" evidence="3">
    <location>
        <begin position="162"/>
        <end position="179"/>
    </location>
</feature>
<feature type="compositionally biased region" description="Basic and acidic residues" evidence="3">
    <location>
        <begin position="188"/>
        <end position="203"/>
    </location>
</feature>
<feature type="compositionally biased region" description="Low complexity" evidence="3">
    <location>
        <begin position="313"/>
        <end position="331"/>
    </location>
</feature>
<feature type="compositionally biased region" description="Polar residues" evidence="3">
    <location>
        <begin position="362"/>
        <end position="376"/>
    </location>
</feature>
<feature type="compositionally biased region" description="Basic and acidic residues" evidence="3">
    <location>
        <begin position="380"/>
        <end position="395"/>
    </location>
</feature>
<feature type="compositionally biased region" description="Basic and acidic residues" evidence="3">
    <location>
        <begin position="404"/>
        <end position="420"/>
    </location>
</feature>
<feature type="compositionally biased region" description="Polar residues" evidence="3">
    <location>
        <begin position="451"/>
        <end position="465"/>
    </location>
</feature>
<keyword id="KW-1003">Cell membrane</keyword>
<keyword id="KW-0333">Golgi apparatus</keyword>
<keyword id="KW-0472">Membrane</keyword>
<keyword id="KW-0539">Nucleus</keyword>
<keyword id="KW-1185">Reference proteome</keyword>
<keyword id="KW-0804">Transcription</keyword>
<keyword id="KW-0805">Transcription regulation</keyword>
<dbReference type="EMBL" id="X82876">
    <property type="protein sequence ID" value="CAA58057.1"/>
    <property type="molecule type" value="mRNA"/>
</dbReference>
<dbReference type="RefSeq" id="NP_001076243.1">
    <property type="nucleotide sequence ID" value="NM_001082774.1"/>
</dbReference>
<dbReference type="SMR" id="O02665"/>
<dbReference type="FunCoup" id="O02665">
    <property type="interactions" value="2"/>
</dbReference>
<dbReference type="PaxDb" id="9986-ENSOCUP00000014863"/>
<dbReference type="GeneID" id="100009562"/>
<dbReference type="KEGG" id="ocu:100009562"/>
<dbReference type="CTD" id="6248"/>
<dbReference type="eggNOG" id="KOG0012">
    <property type="taxonomic scope" value="Eukaryota"/>
</dbReference>
<dbReference type="InParanoid" id="O02665"/>
<dbReference type="OrthoDB" id="1047367at2759"/>
<dbReference type="Proteomes" id="UP000001811">
    <property type="component" value="Unplaced"/>
</dbReference>
<dbReference type="GO" id="GO:0005794">
    <property type="term" value="C:Golgi apparatus"/>
    <property type="evidence" value="ECO:0007669"/>
    <property type="project" value="UniProtKB-SubCell"/>
</dbReference>
<dbReference type="GO" id="GO:0005634">
    <property type="term" value="C:nucleus"/>
    <property type="evidence" value="ECO:0007669"/>
    <property type="project" value="UniProtKB-SubCell"/>
</dbReference>
<dbReference type="GO" id="GO:0005886">
    <property type="term" value="C:plasma membrane"/>
    <property type="evidence" value="ECO:0007669"/>
    <property type="project" value="UniProtKB-SubCell"/>
</dbReference>
<dbReference type="InterPro" id="IPR015940">
    <property type="entry name" value="UBA"/>
</dbReference>
<dbReference type="PANTHER" id="PTHR15397:SF3">
    <property type="entry name" value="DNA DAMAGE INDUCIBLE 1 HOMOLOG 2"/>
    <property type="match status" value="1"/>
</dbReference>
<dbReference type="PANTHER" id="PTHR15397">
    <property type="entry name" value="SODIUM-GLUCOSE COTRANSPORTER REGULATORY PROTEIN -RELATED"/>
    <property type="match status" value="1"/>
</dbReference>
<dbReference type="SMART" id="SM00165">
    <property type="entry name" value="UBA"/>
    <property type="match status" value="1"/>
</dbReference>
<dbReference type="PROSITE" id="PS50030">
    <property type="entry name" value="UBA"/>
    <property type="match status" value="1"/>
</dbReference>
<comment type="function">
    <text evidence="1 4">Mediates transcriptional and post-transcriptional regulation of SLC5A1. Inhibits a dynamin and PKC-dependent exocytotic pathway of SLC5A1. Also involved in transcriptional regulation of SLC22A2. Exhibits glucose-dependent, short-term inhibition of SLC5A1 and SLC22A2 by inhibiting the release of vesicles from the trans-Golgi network (By similarity).</text>
</comment>
<comment type="subunit">
    <text evidence="1">Interacts with YRDC.</text>
</comment>
<comment type="subcellular location">
    <subcellularLocation>
        <location evidence="1">Cell membrane</location>
    </subcellularLocation>
    <subcellularLocation>
        <location evidence="1">Nucleus</location>
    </subcellularLocation>
    <subcellularLocation>
        <location evidence="1">Golgi apparatus</location>
        <location evidence="1">trans-Golgi network</location>
    </subcellularLocation>
    <text evidence="1">Localizes at the inner side of the plasma membrane.</text>
</comment>
<comment type="tissue specificity">
    <text evidence="4">Highly expressed in renal outer medulla, renal inner medulla, duodenum, ileum and jejunum. Moderately expressed in renal outer cortex, renal papilla, brain and liver.</text>
</comment>
<gene>
    <name type="primary">RSC1A1</name>
</gene>
<accession>O02665</accession>
<name>RSCA1_RABIT</name>
<reference key="1">
    <citation type="journal article" date="1999" name="Biochim. Biophys. Acta">
        <title>Cloning and characterization of the transport modifier RS1 from rabbit which was previously assumed to be specific for Na+-D-glucose cotransport.</title>
        <authorList>
            <person name="Reinhardt J."/>
            <person name="Veyhl M."/>
            <person name="Wagner K."/>
            <person name="Gambaryan S."/>
            <person name="Dekel C."/>
            <person name="Akhoundova A."/>
            <person name="Korn T."/>
            <person name="Koepsell H."/>
        </authorList>
    </citation>
    <scope>NUCLEOTIDE SEQUENCE [MRNA]</scope>
    <scope>FUNCTION</scope>
    <scope>TISSUE SPECIFICITY</scope>
</reference>
<evidence type="ECO:0000250" key="1"/>
<evidence type="ECO:0000255" key="2">
    <source>
        <dbReference type="PROSITE-ProRule" id="PRU00212"/>
    </source>
</evidence>
<evidence type="ECO:0000256" key="3">
    <source>
        <dbReference type="SAM" id="MobiDB-lite"/>
    </source>
</evidence>
<evidence type="ECO:0000269" key="4">
    <source>
    </source>
</evidence>
<protein>
    <recommendedName>
        <fullName>Regulatory solute carrier protein family 1 member 1</fullName>
    </recommendedName>
    <alternativeName>
        <fullName>Transporter regulator RS1</fullName>
        <shortName>rRS1</shortName>
    </alternativeName>
</protein>